<name>ATPA_CLOBM</name>
<reference key="1">
    <citation type="journal article" date="2007" name="PLoS ONE">
        <title>Analysis of the neurotoxin complex genes in Clostridium botulinum A1-A4 and B1 strains: BoNT/A3, /Ba4 and /B1 clusters are located within plasmids.</title>
        <authorList>
            <person name="Smith T.J."/>
            <person name="Hill K.K."/>
            <person name="Foley B.T."/>
            <person name="Detter J.C."/>
            <person name="Munk A.C."/>
            <person name="Bruce D.C."/>
            <person name="Doggett N.A."/>
            <person name="Smith L.A."/>
            <person name="Marks J.D."/>
            <person name="Xie G."/>
            <person name="Brettin T.S."/>
        </authorList>
    </citation>
    <scope>NUCLEOTIDE SEQUENCE [LARGE SCALE GENOMIC DNA]</scope>
    <source>
        <strain>Loch Maree / Type A3</strain>
    </source>
</reference>
<keyword id="KW-0066">ATP synthesis</keyword>
<keyword id="KW-0067">ATP-binding</keyword>
<keyword id="KW-1003">Cell membrane</keyword>
<keyword id="KW-0139">CF(1)</keyword>
<keyword id="KW-0375">Hydrogen ion transport</keyword>
<keyword id="KW-0406">Ion transport</keyword>
<keyword id="KW-0472">Membrane</keyword>
<keyword id="KW-0547">Nucleotide-binding</keyword>
<keyword id="KW-1278">Translocase</keyword>
<keyword id="KW-0813">Transport</keyword>
<feature type="chain" id="PRO_1000143359" description="ATP synthase subunit alpha">
    <location>
        <begin position="1"/>
        <end position="504"/>
    </location>
</feature>
<feature type="binding site" evidence="1">
    <location>
        <begin position="169"/>
        <end position="176"/>
    </location>
    <ligand>
        <name>ATP</name>
        <dbReference type="ChEBI" id="CHEBI:30616"/>
    </ligand>
</feature>
<feature type="site" description="Required for activity" evidence="1">
    <location>
        <position position="362"/>
    </location>
</feature>
<evidence type="ECO:0000255" key="1">
    <source>
        <dbReference type="HAMAP-Rule" id="MF_01346"/>
    </source>
</evidence>
<comment type="function">
    <text evidence="1">Produces ATP from ADP in the presence of a proton gradient across the membrane. The alpha chain is a regulatory subunit.</text>
</comment>
<comment type="catalytic activity">
    <reaction evidence="1">
        <text>ATP + H2O + 4 H(+)(in) = ADP + phosphate + 5 H(+)(out)</text>
        <dbReference type="Rhea" id="RHEA:57720"/>
        <dbReference type="ChEBI" id="CHEBI:15377"/>
        <dbReference type="ChEBI" id="CHEBI:15378"/>
        <dbReference type="ChEBI" id="CHEBI:30616"/>
        <dbReference type="ChEBI" id="CHEBI:43474"/>
        <dbReference type="ChEBI" id="CHEBI:456216"/>
        <dbReference type="EC" id="7.1.2.2"/>
    </reaction>
</comment>
<comment type="subunit">
    <text evidence="1">F-type ATPases have 2 components, CF(1) - the catalytic core - and CF(0) - the membrane proton channel. CF(1) has five subunits: alpha(3), beta(3), gamma(1), delta(1), epsilon(1). CF(0) has three main subunits: a(1), b(2) and c(9-12). The alpha and beta chains form an alternating ring which encloses part of the gamma chain. CF(1) is attached to CF(0) by a central stalk formed by the gamma and epsilon chains, while a peripheral stalk is formed by the delta and b chains.</text>
</comment>
<comment type="subcellular location">
    <subcellularLocation>
        <location evidence="1">Cell membrane</location>
        <topology evidence="1">Peripheral membrane protein</topology>
    </subcellularLocation>
</comment>
<comment type="similarity">
    <text evidence="1">Belongs to the ATPase alpha/beta chains family.</text>
</comment>
<sequence length="504" mass="55396">MNIKPEEITSIIRQQIENFNTNIETIDSGTIIQIGDGIARVYGLEDCMEGELIEFPNDVYGMALNLEQDNVGCVLLGSEEGIKEGNVVKRTKKVVEVPVGEALVGRVVNSLGMPIDGKGPVLTTETRDVEVPAPGVIDRQSVKEPLQTGIKAIDSMIPIGKGQRELIIGDRQTGKTAIAMDTILNQKGKDVICIYVAIGQKQSTVAHIVNDLTKMGAMDYTIVVSSTASDSAPLQYLAPYAGCSMGEYFMHKGKDVLIVYDDLSKHAVAYRTMSLLLRRPPGREAYPGDVFYLHSRLLERSARLSEKLGGGSLTALPIVETLAGDVTAYIPTNVISITDGQIFLESELFNAGQRPAVNAGISVSRVGGNAQIKAMKQVAGTLRLELAQYRELAAFSQFGSDLDKESVKRLEKGKRLVEILKQPQYGPMPVEKEIIILYAAVSNHLIDIPVNKIKEFEKELFNYIDTHYRDIGKDILEHKQLTDELKSKLDKAINDFKNVFLSEI</sequence>
<proteinExistence type="inferred from homology"/>
<accession>B1KSS6</accession>
<organism>
    <name type="scientific">Clostridium botulinum (strain Loch Maree / Type A3)</name>
    <dbReference type="NCBI Taxonomy" id="498214"/>
    <lineage>
        <taxon>Bacteria</taxon>
        <taxon>Bacillati</taxon>
        <taxon>Bacillota</taxon>
        <taxon>Clostridia</taxon>
        <taxon>Eubacteriales</taxon>
        <taxon>Clostridiaceae</taxon>
        <taxon>Clostridium</taxon>
    </lineage>
</organism>
<gene>
    <name evidence="1" type="primary">atpA</name>
    <name type="ordered locus">CLK_3329</name>
</gene>
<dbReference type="EC" id="7.1.2.2" evidence="1"/>
<dbReference type="EMBL" id="CP000962">
    <property type="protein sequence ID" value="ACA54567.1"/>
    <property type="molecule type" value="Genomic_DNA"/>
</dbReference>
<dbReference type="RefSeq" id="WP_012342652.1">
    <property type="nucleotide sequence ID" value="NC_010520.1"/>
</dbReference>
<dbReference type="SMR" id="B1KSS6"/>
<dbReference type="KEGG" id="cbl:CLK_3329"/>
<dbReference type="HOGENOM" id="CLU_010091_2_1_9"/>
<dbReference type="GO" id="GO:0005886">
    <property type="term" value="C:plasma membrane"/>
    <property type="evidence" value="ECO:0007669"/>
    <property type="project" value="UniProtKB-SubCell"/>
</dbReference>
<dbReference type="GO" id="GO:0045259">
    <property type="term" value="C:proton-transporting ATP synthase complex"/>
    <property type="evidence" value="ECO:0007669"/>
    <property type="project" value="UniProtKB-KW"/>
</dbReference>
<dbReference type="GO" id="GO:0043531">
    <property type="term" value="F:ADP binding"/>
    <property type="evidence" value="ECO:0007669"/>
    <property type="project" value="TreeGrafter"/>
</dbReference>
<dbReference type="GO" id="GO:0005524">
    <property type="term" value="F:ATP binding"/>
    <property type="evidence" value="ECO:0007669"/>
    <property type="project" value="UniProtKB-UniRule"/>
</dbReference>
<dbReference type="GO" id="GO:0046933">
    <property type="term" value="F:proton-transporting ATP synthase activity, rotational mechanism"/>
    <property type="evidence" value="ECO:0007669"/>
    <property type="project" value="UniProtKB-UniRule"/>
</dbReference>
<dbReference type="CDD" id="cd18113">
    <property type="entry name" value="ATP-synt_F1_alpha_C"/>
    <property type="match status" value="1"/>
</dbReference>
<dbReference type="CDD" id="cd18116">
    <property type="entry name" value="ATP-synt_F1_alpha_N"/>
    <property type="match status" value="1"/>
</dbReference>
<dbReference type="CDD" id="cd01132">
    <property type="entry name" value="F1-ATPase_alpha_CD"/>
    <property type="match status" value="1"/>
</dbReference>
<dbReference type="FunFam" id="1.20.150.20:FF:000001">
    <property type="entry name" value="ATP synthase subunit alpha"/>
    <property type="match status" value="1"/>
</dbReference>
<dbReference type="FunFam" id="2.40.30.20:FF:000001">
    <property type="entry name" value="ATP synthase subunit alpha"/>
    <property type="match status" value="1"/>
</dbReference>
<dbReference type="FunFam" id="3.40.50.300:FF:000002">
    <property type="entry name" value="ATP synthase subunit alpha"/>
    <property type="match status" value="1"/>
</dbReference>
<dbReference type="Gene3D" id="2.40.30.20">
    <property type="match status" value="1"/>
</dbReference>
<dbReference type="Gene3D" id="1.20.150.20">
    <property type="entry name" value="ATP synthase alpha/beta chain, C-terminal domain"/>
    <property type="match status" value="1"/>
</dbReference>
<dbReference type="Gene3D" id="3.40.50.300">
    <property type="entry name" value="P-loop containing nucleotide triphosphate hydrolases"/>
    <property type="match status" value="1"/>
</dbReference>
<dbReference type="HAMAP" id="MF_01346">
    <property type="entry name" value="ATP_synth_alpha_bact"/>
    <property type="match status" value="1"/>
</dbReference>
<dbReference type="InterPro" id="IPR023366">
    <property type="entry name" value="ATP_synth_asu-like_sf"/>
</dbReference>
<dbReference type="InterPro" id="IPR000793">
    <property type="entry name" value="ATP_synth_asu_C"/>
</dbReference>
<dbReference type="InterPro" id="IPR038376">
    <property type="entry name" value="ATP_synth_asu_C_sf"/>
</dbReference>
<dbReference type="InterPro" id="IPR033732">
    <property type="entry name" value="ATP_synth_F1_a_nt-bd_dom"/>
</dbReference>
<dbReference type="InterPro" id="IPR005294">
    <property type="entry name" value="ATP_synth_F1_asu"/>
</dbReference>
<dbReference type="InterPro" id="IPR020003">
    <property type="entry name" value="ATPase_a/bsu_AS"/>
</dbReference>
<dbReference type="InterPro" id="IPR004100">
    <property type="entry name" value="ATPase_F1/V1/A1_a/bsu_N"/>
</dbReference>
<dbReference type="InterPro" id="IPR036121">
    <property type="entry name" value="ATPase_F1/V1/A1_a/bsu_N_sf"/>
</dbReference>
<dbReference type="InterPro" id="IPR000194">
    <property type="entry name" value="ATPase_F1/V1/A1_a/bsu_nucl-bd"/>
</dbReference>
<dbReference type="InterPro" id="IPR027417">
    <property type="entry name" value="P-loop_NTPase"/>
</dbReference>
<dbReference type="NCBIfam" id="TIGR00962">
    <property type="entry name" value="atpA"/>
    <property type="match status" value="1"/>
</dbReference>
<dbReference type="NCBIfam" id="NF009884">
    <property type="entry name" value="PRK13343.1"/>
    <property type="match status" value="1"/>
</dbReference>
<dbReference type="PANTHER" id="PTHR48082">
    <property type="entry name" value="ATP SYNTHASE SUBUNIT ALPHA, MITOCHONDRIAL"/>
    <property type="match status" value="1"/>
</dbReference>
<dbReference type="PANTHER" id="PTHR48082:SF2">
    <property type="entry name" value="ATP SYNTHASE SUBUNIT ALPHA, MITOCHONDRIAL"/>
    <property type="match status" value="1"/>
</dbReference>
<dbReference type="Pfam" id="PF00006">
    <property type="entry name" value="ATP-synt_ab"/>
    <property type="match status" value="1"/>
</dbReference>
<dbReference type="Pfam" id="PF00306">
    <property type="entry name" value="ATP-synt_ab_C"/>
    <property type="match status" value="1"/>
</dbReference>
<dbReference type="Pfam" id="PF02874">
    <property type="entry name" value="ATP-synt_ab_N"/>
    <property type="match status" value="1"/>
</dbReference>
<dbReference type="PIRSF" id="PIRSF039088">
    <property type="entry name" value="F_ATPase_subunit_alpha"/>
    <property type="match status" value="1"/>
</dbReference>
<dbReference type="SUPFAM" id="SSF47917">
    <property type="entry name" value="C-terminal domain of alpha and beta subunits of F1 ATP synthase"/>
    <property type="match status" value="1"/>
</dbReference>
<dbReference type="SUPFAM" id="SSF50615">
    <property type="entry name" value="N-terminal domain of alpha and beta subunits of F1 ATP synthase"/>
    <property type="match status" value="1"/>
</dbReference>
<dbReference type="SUPFAM" id="SSF52540">
    <property type="entry name" value="P-loop containing nucleoside triphosphate hydrolases"/>
    <property type="match status" value="1"/>
</dbReference>
<dbReference type="PROSITE" id="PS00152">
    <property type="entry name" value="ATPASE_ALPHA_BETA"/>
    <property type="match status" value="1"/>
</dbReference>
<protein>
    <recommendedName>
        <fullName evidence="1">ATP synthase subunit alpha</fullName>
        <ecNumber evidence="1">7.1.2.2</ecNumber>
    </recommendedName>
    <alternativeName>
        <fullName evidence="1">ATP synthase F1 sector subunit alpha</fullName>
    </alternativeName>
    <alternativeName>
        <fullName evidence="1">F-ATPase subunit alpha</fullName>
    </alternativeName>
</protein>